<proteinExistence type="evidence at protein level"/>
<accession>Q9H2F3</accession>
<accession>Q96M28</accession>
<accession>Q9BSN9</accession>
<feature type="chain" id="PRO_0000087791" description="3 beta-hydroxysteroid dehydrogenase type 7">
    <location>
        <begin position="1"/>
        <end position="369"/>
    </location>
</feature>
<feature type="transmembrane region" description="Helical" evidence="3">
    <location>
        <begin position="289"/>
        <end position="309"/>
    </location>
</feature>
<feature type="transmembrane region" description="Helical" evidence="3">
    <location>
        <begin position="311"/>
        <end position="331"/>
    </location>
</feature>
<feature type="active site" description="Proton acceptor" evidence="1">
    <location>
        <position position="159"/>
    </location>
</feature>
<feature type="binding site" evidence="1">
    <location>
        <position position="163"/>
    </location>
    <ligand>
        <name>NAD(+)</name>
        <dbReference type="ChEBI" id="CHEBI:57540"/>
    </ligand>
</feature>
<feature type="splice variant" id="VSP_042658" description="In isoform 2." evidence="6">
    <original>VRGGLPLVTCALRPTGIYGEGHQIMRDFYRQGLRLGGWLFRAIPASVEHGRVYVGNVAWMHVLAARELEQRATLMGGQVYFCYDGSPYRSYEDFNMEFLGPCGLRLVGARPLLPYWLLVFLAALNALLQWLLRPLVLYAPLLNPYTLAVANTTFTVSTDKAQRHFGYEPLFSWEDSRTRTILWVQAATGSAQ</original>
    <variation>AMLPGCTCWQPGSWSSGQP</variation>
    <location>
        <begin position="178"/>
        <end position="369"/>
    </location>
</feature>
<feature type="sequence variant" id="VAR_054775" description="In CBAS1." evidence="5">
    <original>G</original>
    <variation>S</variation>
    <location>
        <position position="19"/>
    </location>
</feature>
<feature type="sequence variant" id="VAR_054776" description="In CBAS1; loss of activity; dbSNP:rs104894518." evidence="5">
    <original>E</original>
    <variation>K</variation>
    <location>
        <position position="147"/>
    </location>
</feature>
<feature type="sequence variant" id="VAR_031040" description="In dbSNP:rs9938550." evidence="4">
    <original>T</original>
    <variation>A</variation>
    <location>
        <position position="250"/>
    </location>
</feature>
<feature type="sequence variant" id="VAR_048100" description="In dbSNP:rs34212827.">
    <original>L</original>
    <variation>P</variation>
    <location>
        <position position="347"/>
    </location>
</feature>
<feature type="sequence conflict" description="In Ref. 1; AAG37824." evidence="7" ref="1">
    <original>Y</original>
    <variation>H</variation>
    <location>
        <position position="265"/>
    </location>
</feature>
<feature type="sequence conflict" description="In Ref. 1; AAG37824." evidence="7" ref="1">
    <original>T</original>
    <variation>A</variation>
    <location>
        <position position="329"/>
    </location>
</feature>
<protein>
    <recommendedName>
        <fullName evidence="7">3 beta-hydroxysteroid dehydrogenase type 7</fullName>
    </recommendedName>
    <alternativeName>
        <fullName>3 beta-hydroxysteroid dehydrogenase type VII</fullName>
        <shortName>3-beta-HSD VII</shortName>
    </alternativeName>
    <alternativeName>
        <fullName>3-beta-hydroxy-Delta(5)-C27 steroid oxidoreductase</fullName>
        <shortName>C(27) 3-beta-HSD</shortName>
        <ecNumber>1.1.1.-</ecNumber>
    </alternativeName>
    <alternativeName>
        <fullName>Cholest-5-ene-3-beta,7-alpha-diol 3-beta-dehydrogenase</fullName>
        <ecNumber evidence="4">1.1.1.181</ecNumber>
    </alternativeName>
</protein>
<comment type="function">
    <text evidence="2 4">The 3-beta-HSD enzymatic system plays a crucial role in the biosynthesis of all classes of hormonal steroids. HSD VII is active against four 7-alpha-hydroxylated sterols. Does not metabolize several different C(19/21) steroids as substrates. Involved in bile acid synthesis (PubMed:11067870). Plays a key role in cell positioning and movement in lymphoid tissues by mediating degradation of 7-alpha,25-dihydroxycholesterol (7-alpha,25-OHC): 7-alpha,25-OHC acts as a ligand for the G protein-coupled receptor GPR183/EBI2, a chemotactic receptor for a number of lymphoid cells (By similarity).</text>
</comment>
<comment type="catalytic activity">
    <reaction evidence="4">
        <text>7alpha-hydroxycholesterol + NAD(+) = 7alpha-hydroxycholest-4-en-3-one + NADH + H(+)</text>
        <dbReference type="Rhea" id="RHEA:11896"/>
        <dbReference type="ChEBI" id="CHEBI:15378"/>
        <dbReference type="ChEBI" id="CHEBI:17500"/>
        <dbReference type="ChEBI" id="CHEBI:17899"/>
        <dbReference type="ChEBI" id="CHEBI:57540"/>
        <dbReference type="ChEBI" id="CHEBI:57945"/>
        <dbReference type="EC" id="1.1.1.181"/>
    </reaction>
    <physiologicalReaction direction="left-to-right" evidence="8">
        <dbReference type="Rhea" id="RHEA:11897"/>
    </physiologicalReaction>
</comment>
<comment type="catalytic activity">
    <reaction evidence="4">
        <text>7alpha,25-dihydroxycholesterol + NAD(+) = 7alpha,25-dihydroxy-4-cholesten-3-one + NADH + H(+)</text>
        <dbReference type="Rhea" id="RHEA:47156"/>
        <dbReference type="ChEBI" id="CHEBI:15378"/>
        <dbReference type="ChEBI" id="CHEBI:37623"/>
        <dbReference type="ChEBI" id="CHEBI:57540"/>
        <dbReference type="ChEBI" id="CHEBI:57945"/>
        <dbReference type="ChEBI" id="CHEBI:81013"/>
    </reaction>
    <physiologicalReaction direction="left-to-right" evidence="8">
        <dbReference type="Rhea" id="RHEA:47157"/>
    </physiologicalReaction>
</comment>
<comment type="catalytic activity">
    <reaction evidence="4">
        <text>(25R)-cholest-5-en-3beta,7alpha,26-triol + NAD(+) = (25R)-7alpha,26-dihydroxycholest-4-en-3-one + NADH + H(+)</text>
        <dbReference type="Rhea" id="RHEA:47180"/>
        <dbReference type="ChEBI" id="CHEBI:15378"/>
        <dbReference type="ChEBI" id="CHEBI:57540"/>
        <dbReference type="ChEBI" id="CHEBI:57945"/>
        <dbReference type="ChEBI" id="CHEBI:76592"/>
        <dbReference type="ChEBI" id="CHEBI:87476"/>
    </reaction>
    <physiologicalReaction direction="left-to-right" evidence="8">
        <dbReference type="Rhea" id="RHEA:47181"/>
    </physiologicalReaction>
</comment>
<comment type="catalytic activity">
    <reaction evidence="4">
        <text>(24S)-7alpha-dihydroxycholesterol + NAD(+) = (24S)-7alpha,24-dihydroxycholest-4-en-3-one + NADH + H(+)</text>
        <dbReference type="Rhea" id="RHEA:47200"/>
        <dbReference type="ChEBI" id="CHEBI:15378"/>
        <dbReference type="ChEBI" id="CHEBI:37640"/>
        <dbReference type="ChEBI" id="CHEBI:57540"/>
        <dbReference type="ChEBI" id="CHEBI:57945"/>
        <dbReference type="ChEBI" id="CHEBI:63838"/>
    </reaction>
    <physiologicalReaction direction="left-to-right" evidence="8">
        <dbReference type="Rhea" id="RHEA:47201"/>
    </physiologicalReaction>
</comment>
<comment type="pathway">
    <text evidence="4">Lipid metabolism; steroid biosynthesis.</text>
</comment>
<comment type="interaction">
    <interactant intactId="EBI-3918847">
        <id>Q9H2F3</id>
    </interactant>
    <interactant intactId="EBI-10173507">
        <id>Q6UY14-3</id>
        <label>ADAMTSL4</label>
    </interactant>
    <organismsDiffer>false</organismsDiffer>
    <experiments>3</experiments>
</comment>
<comment type="interaction">
    <interactant intactId="EBI-3918847">
        <id>Q9H2F3</id>
    </interactant>
    <interactant intactId="EBI-712648">
        <id>O95994</id>
        <label>AGR2</label>
    </interactant>
    <organismsDiffer>false</organismsDiffer>
    <experiments>3</experiments>
</comment>
<comment type="interaction">
    <interactant intactId="EBI-3918847">
        <id>Q9H2F3</id>
    </interactant>
    <interactant intactId="EBI-12224467">
        <id>Q9NYG5-2</id>
        <label>ANAPC11</label>
    </interactant>
    <organismsDiffer>false</organismsDiffer>
    <experiments>3</experiments>
</comment>
<comment type="interaction">
    <interactant intactId="EBI-3918847">
        <id>Q9H2F3</id>
    </interactant>
    <interactant intactId="EBI-743771">
        <id>Q92624</id>
        <label>APPBP2</label>
    </interactant>
    <organismsDiffer>false</organismsDiffer>
    <experiments>3</experiments>
</comment>
<comment type="interaction">
    <interactant intactId="EBI-3918847">
        <id>Q9H2F3</id>
    </interactant>
    <interactant intactId="EBI-948603">
        <id>Q03989</id>
        <label>ARID5A</label>
    </interactant>
    <organismsDiffer>false</organismsDiffer>
    <experiments>3</experiments>
</comment>
<comment type="interaction">
    <interactant intactId="EBI-3918847">
        <id>Q9H2F3</id>
    </interactant>
    <interactant intactId="EBI-18394052">
        <id>Q8WXK4-2</id>
        <label>ASB12</label>
    </interactant>
    <organismsDiffer>false</organismsDiffer>
    <experiments>3</experiments>
</comment>
<comment type="interaction">
    <interactant intactId="EBI-3918847">
        <id>Q9H2F3</id>
    </interactant>
    <interactant intactId="EBI-8648738">
        <id>Q8WVV5</id>
        <label>BTN2A2</label>
    </interactant>
    <organismsDiffer>false</organismsDiffer>
    <experiments>3</experiments>
</comment>
<comment type="interaction">
    <interactant intactId="EBI-3918847">
        <id>Q9H2F3</id>
    </interactant>
    <interactant intactId="EBI-7317823">
        <id>Q6P5X5</id>
        <label>C22orf39</label>
    </interactant>
    <organismsDiffer>false</organismsDiffer>
    <experiments>3</experiments>
</comment>
<comment type="interaction">
    <interactant intactId="EBI-3918847">
        <id>Q9H2F3</id>
    </interactant>
    <interactant intactId="EBI-372265">
        <id>P21964</id>
        <label>COMT</label>
    </interactant>
    <organismsDiffer>false</organismsDiffer>
    <experiments>3</experiments>
</comment>
<comment type="interaction">
    <interactant intactId="EBI-3918847">
        <id>Q9H2F3</id>
    </interactant>
    <interactant intactId="EBI-10192698">
        <id>Q02930-3</id>
        <label>CREB5</label>
    </interactant>
    <organismsDiffer>false</organismsDiffer>
    <experiments>3</experiments>
</comment>
<comment type="interaction">
    <interactant intactId="EBI-3918847">
        <id>Q9H2F3</id>
    </interactant>
    <interactant intactId="EBI-3867333">
        <id>A8MQ03</id>
        <label>CYSRT1</label>
    </interactant>
    <organismsDiffer>false</organismsDiffer>
    <experiments>3</experiments>
</comment>
<comment type="interaction">
    <interactant intactId="EBI-3918847">
        <id>Q9H2F3</id>
    </interactant>
    <interactant intactId="EBI-536772">
        <id>Q12805</id>
        <label>EFEMP1</label>
    </interactant>
    <organismsDiffer>false</organismsDiffer>
    <experiments>3</experiments>
</comment>
<comment type="interaction">
    <interactant intactId="EBI-3918847">
        <id>Q9H2F3</id>
    </interactant>
    <interactant intactId="EBI-743414">
        <id>O95967</id>
        <label>EFEMP2</label>
    </interactant>
    <organismsDiffer>false</organismsDiffer>
    <experiments>3</experiments>
</comment>
<comment type="interaction">
    <interactant intactId="EBI-3918847">
        <id>Q9H2F3</id>
    </interactant>
    <interactant intactId="EBI-949532">
        <id>Q9UHF1</id>
        <label>EGFL7</label>
    </interactant>
    <organismsDiffer>false</organismsDiffer>
    <experiments>3</experiments>
</comment>
<comment type="interaction">
    <interactant intactId="EBI-3918847">
        <id>Q9H2F3</id>
    </interactant>
    <interactant intactId="EBI-18535450">
        <id>Q9GZR5</id>
        <label>ELOVL4</label>
    </interactant>
    <organismsDiffer>false</organismsDiffer>
    <experiments>3</experiments>
</comment>
<comment type="interaction">
    <interactant intactId="EBI-3918847">
        <id>Q9H2F3</id>
    </interactant>
    <interactant intactId="EBI-718638">
        <id>Q92979</id>
        <label>EMG1</label>
    </interactant>
    <organismsDiffer>false</organismsDiffer>
    <experiments>3</experiments>
</comment>
<comment type="interaction">
    <interactant intactId="EBI-3918847">
        <id>Q9H2F3</id>
    </interactant>
    <interactant intactId="EBI-947973">
        <id>P98095</id>
        <label>FBLN2</label>
    </interactant>
    <organismsDiffer>false</organismsDiffer>
    <experiments>3</experiments>
</comment>
<comment type="interaction">
    <interactant intactId="EBI-3918847">
        <id>Q9H2F3</id>
    </interactant>
    <interactant intactId="EBI-374781">
        <id>O76003</id>
        <label>GLRX3</label>
    </interactant>
    <organismsDiffer>false</organismsDiffer>
    <experiments>3</experiments>
</comment>
<comment type="interaction">
    <interactant intactId="EBI-3918847">
        <id>Q9H2F3</id>
    </interactant>
    <interactant intactId="EBI-740785">
        <id>P49639</id>
        <label>HOXA1</label>
    </interactant>
    <organismsDiffer>false</organismsDiffer>
    <experiments>3</experiments>
</comment>
<comment type="interaction">
    <interactant intactId="EBI-3918847">
        <id>Q9H2F3</id>
    </interactant>
    <interactant intactId="EBI-18053395">
        <id>Q7Z5P4</id>
        <label>HSD17B13</label>
    </interactant>
    <organismsDiffer>false</organismsDiffer>
    <experiments>3</experiments>
</comment>
<comment type="interaction">
    <interactant intactId="EBI-3918847">
        <id>Q9H2F3</id>
    </interactant>
    <interactant intactId="EBI-396343">
        <id>O00629</id>
        <label>KPNA4</label>
    </interactant>
    <organismsDiffer>false</organismsDiffer>
    <experiments>3</experiments>
</comment>
<comment type="interaction">
    <interactant intactId="EBI-3918847">
        <id>Q9H2F3</id>
    </interactant>
    <interactant intactId="EBI-10981970">
        <id>Q5T749</id>
        <label>KPRP</label>
    </interactant>
    <organismsDiffer>false</organismsDiffer>
    <experiments>3</experiments>
</comment>
<comment type="interaction">
    <interactant intactId="EBI-3918847">
        <id>Q9H2F3</id>
    </interactant>
    <interactant intactId="EBI-948001">
        <id>Q15323</id>
        <label>KRT31</label>
    </interactant>
    <organismsDiffer>false</organismsDiffer>
    <experiments>3</experiments>
</comment>
<comment type="interaction">
    <interactant intactId="EBI-3918847">
        <id>Q9H2F3</id>
    </interactant>
    <interactant intactId="EBI-10171697">
        <id>Q6A162</id>
        <label>KRT40</label>
    </interactant>
    <organismsDiffer>false</organismsDiffer>
    <experiments>3</experiments>
</comment>
<comment type="interaction">
    <interactant intactId="EBI-3918847">
        <id>Q9H2F3</id>
    </interactant>
    <interactant intactId="EBI-9996498">
        <id>O43790</id>
        <label>KRT86</label>
    </interactant>
    <organismsDiffer>false</organismsDiffer>
    <experiments>3</experiments>
</comment>
<comment type="interaction">
    <interactant intactId="EBI-3918847">
        <id>Q9H2F3</id>
    </interactant>
    <interactant intactId="EBI-11749135">
        <id>Q8IUG1</id>
        <label>KRTAP1-3</label>
    </interactant>
    <organismsDiffer>false</organismsDiffer>
    <experiments>3</experiments>
</comment>
<comment type="interaction">
    <interactant intactId="EBI-3918847">
        <id>Q9H2F3</id>
    </interactant>
    <interactant intactId="EBI-10172290">
        <id>P60409</id>
        <label>KRTAP10-7</label>
    </interactant>
    <organismsDiffer>false</organismsDiffer>
    <experiments>3</experiments>
</comment>
<comment type="interaction">
    <interactant intactId="EBI-3918847">
        <id>Q9H2F3</id>
    </interactant>
    <interactant intactId="EBI-10171774">
        <id>P60410</id>
        <label>KRTAP10-8</label>
    </interactant>
    <organismsDiffer>false</organismsDiffer>
    <experiments>8</experiments>
</comment>
<comment type="interaction">
    <interactant intactId="EBI-3918847">
        <id>Q9H2F3</id>
    </interactant>
    <interactant intactId="EBI-10172052">
        <id>P60411</id>
        <label>KRTAP10-9</label>
    </interactant>
    <organismsDiffer>false</organismsDiffer>
    <experiments>3</experiments>
</comment>
<comment type="interaction">
    <interactant intactId="EBI-3918847">
        <id>Q9H2F3</id>
    </interactant>
    <interactant intactId="EBI-10241252">
        <id>Q3SY46</id>
        <label>KRTAP13-3</label>
    </interactant>
    <organismsDiffer>false</organismsDiffer>
    <experiments>3</experiments>
</comment>
<comment type="interaction">
    <interactant intactId="EBI-3918847">
        <id>Q9H2F3</id>
    </interactant>
    <interactant intactId="EBI-12196745">
        <id>Q3LHN2</id>
        <label>KRTAP19-2</label>
    </interactant>
    <organismsDiffer>false</organismsDiffer>
    <experiments>3</experiments>
</comment>
<comment type="interaction">
    <interactant intactId="EBI-3918847">
        <id>Q9H2F3</id>
    </interactant>
    <interactant intactId="EBI-10172511">
        <id>Q9BYR5</id>
        <label>KRTAP4-2</label>
    </interactant>
    <organismsDiffer>false</organismsDiffer>
    <experiments>3</experiments>
</comment>
<comment type="interaction">
    <interactant intactId="EBI-3918847">
        <id>Q9H2F3</id>
    </interactant>
    <interactant intactId="EBI-3958099">
        <id>P26371</id>
        <label>KRTAP5-9</label>
    </interactant>
    <organismsDiffer>false</organismsDiffer>
    <experiments>3</experiments>
</comment>
<comment type="interaction">
    <interactant intactId="EBI-3918847">
        <id>Q9H2F3</id>
    </interactant>
    <interactant intactId="EBI-10246358">
        <id>Q5TA78</id>
        <label>LCE4A</label>
    </interactant>
    <organismsDiffer>false</organismsDiffer>
    <experiments>3</experiments>
</comment>
<comment type="interaction">
    <interactant intactId="EBI-3918847">
        <id>Q9H2F3</id>
    </interactant>
    <interactant intactId="EBI-719955">
        <id>Q96FE5</id>
        <label>LINGO1</label>
    </interactant>
    <organismsDiffer>false</organismsDiffer>
    <experiments>3</experiments>
</comment>
<comment type="interaction">
    <interactant intactId="EBI-3918847">
        <id>Q9H2F3</id>
    </interactant>
    <interactant intactId="EBI-19944212">
        <id>A8MW99</id>
        <label>MEI4</label>
    </interactant>
    <organismsDiffer>false</organismsDiffer>
    <experiments>3</experiments>
</comment>
<comment type="interaction">
    <interactant intactId="EBI-3918847">
        <id>Q9H2F3</id>
    </interactant>
    <interactant intactId="EBI-16439278">
        <id>Q6FHY5</id>
        <label>MEOX2</label>
    </interactant>
    <organismsDiffer>false</organismsDiffer>
    <experiments>3</experiments>
</comment>
<comment type="interaction">
    <interactant intactId="EBI-3918847">
        <id>Q9H2F3</id>
    </interactant>
    <interactant intactId="EBI-945833">
        <id>Q7Z3S9</id>
        <label>NOTCH2NLA</label>
    </interactant>
    <organismsDiffer>false</organismsDiffer>
    <experiments>3</experiments>
</comment>
<comment type="interaction">
    <interactant intactId="EBI-3918847">
        <id>Q9H2F3</id>
    </interactant>
    <interactant intactId="EBI-13644623">
        <id>Q92570</id>
        <label>NR4A3</label>
    </interactant>
    <organismsDiffer>false</organismsDiffer>
    <experiments>3</experiments>
</comment>
<comment type="interaction">
    <interactant intactId="EBI-3918847">
        <id>Q9H2F3</id>
    </interactant>
    <interactant intactId="EBI-9087860">
        <id>P32243-2</id>
        <label>OTX2</label>
    </interactant>
    <organismsDiffer>false</organismsDiffer>
    <experiments>3</experiments>
</comment>
<comment type="interaction">
    <interactant intactId="EBI-3918847">
        <id>Q9H2F3</id>
    </interactant>
    <interactant intactId="EBI-12806054">
        <id>P10745</id>
        <label>RBP3</label>
    </interactant>
    <organismsDiffer>false</organismsDiffer>
    <experiments>3</experiments>
</comment>
<comment type="interaction">
    <interactant intactId="EBI-3918847">
        <id>Q9H2F3</id>
    </interactant>
    <interactant intactId="EBI-7545592">
        <id>Q9H6H4</id>
        <label>REEP4</label>
    </interactant>
    <organismsDiffer>false</organismsDiffer>
    <experiments>3</experiments>
</comment>
<comment type="interaction">
    <interactant intactId="EBI-3918847">
        <id>Q9H2F3</id>
    </interactant>
    <interactant intactId="EBI-3918154">
        <id>Q9UGC6</id>
        <label>RGS17</label>
    </interactant>
    <organismsDiffer>false</organismsDiffer>
    <experiments>3</experiments>
</comment>
<comment type="interaction">
    <interactant intactId="EBI-3918847">
        <id>Q9H2F3</id>
    </interactant>
    <interactant intactId="EBI-8636004">
        <id>Q96GQ5</id>
        <label>RUSF1</label>
    </interactant>
    <organismsDiffer>false</organismsDiffer>
    <experiments>3</experiments>
</comment>
<comment type="interaction">
    <interactant intactId="EBI-3918847">
        <id>Q9H2F3</id>
    </interactant>
    <interactant intactId="EBI-742487">
        <id>O43597</id>
        <label>SPRY2</label>
    </interactant>
    <organismsDiffer>false</organismsDiffer>
    <experiments>3</experiments>
</comment>
<comment type="interaction">
    <interactant intactId="EBI-3918847">
        <id>Q9H2F3</id>
    </interactant>
    <interactant intactId="EBI-6447886">
        <id>Q9Y320</id>
        <label>TMX2</label>
    </interactant>
    <organismsDiffer>false</organismsDiffer>
    <experiments>3</experiments>
</comment>
<comment type="interaction">
    <interactant intactId="EBI-3918847">
        <id>Q9H2F3</id>
    </interactant>
    <interactant intactId="EBI-5235829">
        <id>Q8IWZ5</id>
        <label>TRIM42</label>
    </interactant>
    <organismsDiffer>false</organismsDiffer>
    <experiments>5</experiments>
</comment>
<comment type="interaction">
    <interactant intactId="EBI-3918847">
        <id>Q9H2F3</id>
    </interactant>
    <interactant intactId="EBI-12287587">
        <id>B2RXF5</id>
        <label>ZBTB42</label>
    </interactant>
    <organismsDiffer>false</organismsDiffer>
    <experiments>3</experiments>
</comment>
<comment type="interaction">
    <interactant intactId="EBI-3918847">
        <id>Q9H2F3</id>
    </interactant>
    <interactant intactId="EBI-625509">
        <id>Q8N720</id>
        <label>ZNF655</label>
    </interactant>
    <organismsDiffer>false</organismsDiffer>
    <experiments>3</experiments>
</comment>
<comment type="subcellular location">
    <subcellularLocation>
        <location>Endoplasmic reticulum membrane</location>
        <topology>Multi-pass membrane protein</topology>
    </subcellularLocation>
</comment>
<comment type="alternative products">
    <event type="alternative splicing"/>
    <isoform>
        <id>Q9H2F3-1</id>
        <name>1</name>
        <sequence type="displayed"/>
    </isoform>
    <isoform>
        <id>Q9H2F3-2</id>
        <name>2</name>
        <sequence type="described" ref="VSP_042658"/>
    </isoform>
</comment>
<comment type="disease" evidence="4 5">
    <disease id="DI-00329">
        <name>Congenital bile acid synthesis defect 1</name>
        <acronym>CBAS1</acronym>
        <description>A primary defect in bile synthesis leading to progressive liver disease. Clinical features include neonatal jaundice, severe intrahepatic cholestasis, cirrhosis.</description>
        <dbReference type="MIM" id="607765"/>
    </disease>
    <text>The disease is caused by variants affecting the gene represented in this entry.</text>
</comment>
<comment type="similarity">
    <text evidence="7">Belongs to the 3-beta-HSD family.</text>
</comment>
<dbReference type="EC" id="1.1.1.-"/>
<dbReference type="EC" id="1.1.1.181" evidence="4"/>
<dbReference type="EMBL" id="AF277719">
    <property type="protein sequence ID" value="AAG37824.1"/>
    <property type="molecule type" value="mRNA"/>
</dbReference>
<dbReference type="EMBL" id="AK057436">
    <property type="protein sequence ID" value="BAB71486.1"/>
    <property type="molecule type" value="mRNA"/>
</dbReference>
<dbReference type="EMBL" id="AK290950">
    <property type="protein sequence ID" value="BAF83639.1"/>
    <property type="molecule type" value="mRNA"/>
</dbReference>
<dbReference type="EMBL" id="AK292068">
    <property type="protein sequence ID" value="BAF84757.1"/>
    <property type="molecule type" value="mRNA"/>
</dbReference>
<dbReference type="EMBL" id="AC135048">
    <property type="status" value="NOT_ANNOTATED_CDS"/>
    <property type="molecule type" value="Genomic_DNA"/>
</dbReference>
<dbReference type="EMBL" id="CH471192">
    <property type="protein sequence ID" value="EAW52183.1"/>
    <property type="molecule type" value="Genomic_DNA"/>
</dbReference>
<dbReference type="EMBL" id="BC004929">
    <property type="protein sequence ID" value="AAH04929.1"/>
    <property type="molecule type" value="mRNA"/>
</dbReference>
<dbReference type="CCDS" id="CCDS10698.1">
    <molecule id="Q9H2F3-1"/>
</dbReference>
<dbReference type="CCDS" id="CCDS45466.1">
    <molecule id="Q9H2F3-2"/>
</dbReference>
<dbReference type="RefSeq" id="NP_001136249.1">
    <molecule id="Q9H2F3-2"/>
    <property type="nucleotide sequence ID" value="NM_001142777.2"/>
</dbReference>
<dbReference type="RefSeq" id="NP_001136250.1">
    <molecule id="Q9H2F3-2"/>
    <property type="nucleotide sequence ID" value="NM_001142778.2"/>
</dbReference>
<dbReference type="RefSeq" id="NP_079469.2">
    <molecule id="Q9H2F3-1"/>
    <property type="nucleotide sequence ID" value="NM_025193.3"/>
</dbReference>
<dbReference type="RefSeq" id="XP_005255658.2">
    <molecule id="Q9H2F3-1"/>
    <property type="nucleotide sequence ID" value="XM_005255601.4"/>
</dbReference>
<dbReference type="RefSeq" id="XP_011544262.1">
    <molecule id="Q9H2F3-1"/>
    <property type="nucleotide sequence ID" value="XM_011545960.3"/>
</dbReference>
<dbReference type="RefSeq" id="XP_011544263.1">
    <molecule id="Q9H2F3-1"/>
    <property type="nucleotide sequence ID" value="XM_011545961.2"/>
</dbReference>
<dbReference type="RefSeq" id="XP_011544264.1">
    <molecule id="Q9H2F3-2"/>
    <property type="nucleotide sequence ID" value="XM_011545962.3"/>
</dbReference>
<dbReference type="RefSeq" id="XP_016879221.1">
    <molecule id="Q9H2F3-2"/>
    <property type="nucleotide sequence ID" value="XM_017023732.2"/>
</dbReference>
<dbReference type="RefSeq" id="XP_047290672.1">
    <molecule id="Q9H2F3-1"/>
    <property type="nucleotide sequence ID" value="XM_047434716.1"/>
</dbReference>
<dbReference type="RefSeq" id="XP_054170025.1">
    <molecule id="Q9H2F3-2"/>
    <property type="nucleotide sequence ID" value="XM_054314050.1"/>
</dbReference>
<dbReference type="RefSeq" id="XP_054170026.1">
    <molecule id="Q9H2F3-2"/>
    <property type="nucleotide sequence ID" value="XM_054314051.1"/>
</dbReference>
<dbReference type="BioGRID" id="123208">
    <property type="interactions" value="386"/>
</dbReference>
<dbReference type="FunCoup" id="Q9H2F3">
    <property type="interactions" value="100"/>
</dbReference>
<dbReference type="IntAct" id="Q9H2F3">
    <property type="interactions" value="53"/>
</dbReference>
<dbReference type="STRING" id="9606.ENSP00000297679"/>
<dbReference type="SwissLipids" id="SLP:000001321"/>
<dbReference type="iPTMnet" id="Q9H2F3"/>
<dbReference type="PhosphoSitePlus" id="Q9H2F3"/>
<dbReference type="BioMuta" id="HSD3B7"/>
<dbReference type="DMDM" id="47605550"/>
<dbReference type="jPOST" id="Q9H2F3"/>
<dbReference type="MassIVE" id="Q9H2F3"/>
<dbReference type="PaxDb" id="9606-ENSP00000297679"/>
<dbReference type="PeptideAtlas" id="Q9H2F3"/>
<dbReference type="ProteomicsDB" id="80538">
    <molecule id="Q9H2F3-1"/>
</dbReference>
<dbReference type="ProteomicsDB" id="80539">
    <molecule id="Q9H2F3-2"/>
</dbReference>
<dbReference type="Pumba" id="Q9H2F3"/>
<dbReference type="Antibodypedia" id="27526">
    <property type="antibodies" value="184 antibodies from 27 providers"/>
</dbReference>
<dbReference type="DNASU" id="80270"/>
<dbReference type="Ensembl" id="ENST00000262520.10">
    <molecule id="Q9H2F3-2"/>
    <property type="protein sequence ID" value="ENSP00000262520.6"/>
    <property type="gene ID" value="ENSG00000099377.14"/>
</dbReference>
<dbReference type="Ensembl" id="ENST00000297679.10">
    <molecule id="Q9H2F3-1"/>
    <property type="protein sequence ID" value="ENSP00000297679.5"/>
    <property type="gene ID" value="ENSG00000099377.14"/>
</dbReference>
<dbReference type="GeneID" id="80270"/>
<dbReference type="KEGG" id="hsa:80270"/>
<dbReference type="MANE-Select" id="ENST00000297679.10">
    <property type="protein sequence ID" value="ENSP00000297679.5"/>
    <property type="RefSeq nucleotide sequence ID" value="NM_025193.4"/>
    <property type="RefSeq protein sequence ID" value="NP_079469.2"/>
</dbReference>
<dbReference type="UCSC" id="uc002eaf.3">
    <molecule id="Q9H2F3-1"/>
    <property type="organism name" value="human"/>
</dbReference>
<dbReference type="AGR" id="HGNC:18324"/>
<dbReference type="CTD" id="80270"/>
<dbReference type="DisGeNET" id="80270"/>
<dbReference type="GeneCards" id="HSD3B7"/>
<dbReference type="HGNC" id="HGNC:18324">
    <property type="gene designation" value="HSD3B7"/>
</dbReference>
<dbReference type="HPA" id="ENSG00000099377">
    <property type="expression patterns" value="Tissue enriched (liver)"/>
</dbReference>
<dbReference type="MalaCards" id="HSD3B7"/>
<dbReference type="MIM" id="607764">
    <property type="type" value="gene"/>
</dbReference>
<dbReference type="MIM" id="607765">
    <property type="type" value="phenotype"/>
</dbReference>
<dbReference type="neXtProt" id="NX_Q9H2F3"/>
<dbReference type="OpenTargets" id="ENSG00000099377"/>
<dbReference type="Orphanet" id="79301">
    <property type="disease" value="Congenital bile acid synthesis defect type 1"/>
</dbReference>
<dbReference type="PharmGKB" id="PA134940289"/>
<dbReference type="VEuPathDB" id="HostDB:ENSG00000099377"/>
<dbReference type="eggNOG" id="KOG1430">
    <property type="taxonomic scope" value="Eukaryota"/>
</dbReference>
<dbReference type="GeneTree" id="ENSGT00940000160236"/>
<dbReference type="HOGENOM" id="CLU_007383_6_3_1"/>
<dbReference type="InParanoid" id="Q9H2F3"/>
<dbReference type="OMA" id="GDHFKRG"/>
<dbReference type="OrthoDB" id="10262413at2759"/>
<dbReference type="PAN-GO" id="Q9H2F3">
    <property type="GO annotations" value="1 GO annotation based on evolutionary models"/>
</dbReference>
<dbReference type="PhylomeDB" id="Q9H2F3"/>
<dbReference type="TreeFam" id="TF354279"/>
<dbReference type="PathwayCommons" id="Q9H2F3"/>
<dbReference type="Reactome" id="R-HSA-193368">
    <property type="pathway name" value="Synthesis of bile acids and bile salts via 7alpha-hydroxycholesterol"/>
</dbReference>
<dbReference type="Reactome" id="R-HSA-193775">
    <property type="pathway name" value="Synthesis of bile acids and bile salts via 24-hydroxycholesterol"/>
</dbReference>
<dbReference type="Reactome" id="R-HSA-193807">
    <property type="pathway name" value="Synthesis of bile acids and bile salts via 27-hydroxycholesterol"/>
</dbReference>
<dbReference type="SignaLink" id="Q9H2F3"/>
<dbReference type="UniPathway" id="UPA00062"/>
<dbReference type="BioGRID-ORCS" id="80270">
    <property type="hits" value="10 hits in 1143 CRISPR screens"/>
</dbReference>
<dbReference type="ChiTaRS" id="HSD3B7">
    <property type="organism name" value="human"/>
</dbReference>
<dbReference type="GenomeRNAi" id="80270"/>
<dbReference type="Pharos" id="Q9H2F3">
    <property type="development level" value="Tbio"/>
</dbReference>
<dbReference type="PRO" id="PR:Q9H2F3"/>
<dbReference type="Proteomes" id="UP000005640">
    <property type="component" value="Chromosome 16"/>
</dbReference>
<dbReference type="RNAct" id="Q9H2F3">
    <property type="molecule type" value="protein"/>
</dbReference>
<dbReference type="Bgee" id="ENSG00000099377">
    <property type="expression patterns" value="Expressed in right lobe of liver and 112 other cell types or tissues"/>
</dbReference>
<dbReference type="ExpressionAtlas" id="Q9H2F3">
    <property type="expression patterns" value="baseline and differential"/>
</dbReference>
<dbReference type="GO" id="GO:0005789">
    <property type="term" value="C:endoplasmic reticulum membrane"/>
    <property type="evidence" value="ECO:0000304"/>
    <property type="project" value="Reactome"/>
</dbReference>
<dbReference type="GO" id="GO:0005811">
    <property type="term" value="C:lipid droplet"/>
    <property type="evidence" value="ECO:0000314"/>
    <property type="project" value="HPA"/>
</dbReference>
<dbReference type="GO" id="GO:0003854">
    <property type="term" value="F:3-beta-hydroxy-Delta5-steroid dehydrogenase (NAD+) activity"/>
    <property type="evidence" value="ECO:0000304"/>
    <property type="project" value="Reactome"/>
</dbReference>
<dbReference type="GO" id="GO:0047016">
    <property type="term" value="F:cholest-5-ene-3-beta,7-alpha-diol 3-beta-dehydrogenase activity"/>
    <property type="evidence" value="ECO:0000250"/>
    <property type="project" value="UniProtKB"/>
</dbReference>
<dbReference type="GO" id="GO:0016616">
    <property type="term" value="F:oxidoreductase activity, acting on the CH-OH group of donors, NAD or NADP as acceptor"/>
    <property type="evidence" value="ECO:0000318"/>
    <property type="project" value="GO_Central"/>
</dbReference>
<dbReference type="GO" id="GO:0035754">
    <property type="term" value="P:B cell chemotaxis"/>
    <property type="evidence" value="ECO:0000250"/>
    <property type="project" value="UniProtKB"/>
</dbReference>
<dbReference type="GO" id="GO:0006699">
    <property type="term" value="P:bile acid biosynthetic process"/>
    <property type="evidence" value="ECO:0000304"/>
    <property type="project" value="UniProtKB"/>
</dbReference>
<dbReference type="GO" id="GO:0006694">
    <property type="term" value="P:steroid biosynthetic process"/>
    <property type="evidence" value="ECO:0007669"/>
    <property type="project" value="UniProtKB-UniPathway"/>
</dbReference>
<dbReference type="CDD" id="cd09811">
    <property type="entry name" value="3b-HSD_HSDB1_like_SDR_e"/>
    <property type="match status" value="1"/>
</dbReference>
<dbReference type="FunFam" id="3.40.50.720:FF:000262">
    <property type="entry name" value="3 beta-hydroxysteroid dehydrogenase type 7 isoform X1"/>
    <property type="match status" value="1"/>
</dbReference>
<dbReference type="Gene3D" id="3.40.50.720">
    <property type="entry name" value="NAD(P)-binding Rossmann-like Domain"/>
    <property type="match status" value="1"/>
</dbReference>
<dbReference type="InterPro" id="IPR002225">
    <property type="entry name" value="3Beta_OHSteriod_DH/Estase"/>
</dbReference>
<dbReference type="InterPro" id="IPR036291">
    <property type="entry name" value="NAD(P)-bd_dom_sf"/>
</dbReference>
<dbReference type="InterPro" id="IPR050425">
    <property type="entry name" value="NAD(P)_dehydrat-like"/>
</dbReference>
<dbReference type="PANTHER" id="PTHR10366:SF847">
    <property type="entry name" value="3 BETA-HYDROXYSTEROID DEHYDROGENASE TYPE 7"/>
    <property type="match status" value="1"/>
</dbReference>
<dbReference type="PANTHER" id="PTHR10366">
    <property type="entry name" value="NAD DEPENDENT EPIMERASE/DEHYDRATASE"/>
    <property type="match status" value="1"/>
</dbReference>
<dbReference type="Pfam" id="PF01073">
    <property type="entry name" value="3Beta_HSD"/>
    <property type="match status" value="1"/>
</dbReference>
<dbReference type="SUPFAM" id="SSF51735">
    <property type="entry name" value="NAD(P)-binding Rossmann-fold domains"/>
    <property type="match status" value="1"/>
</dbReference>
<sequence>MADSAQAQKLVYLVTGGCGFLGEHVVRMLLQREPRLGELRVFDQHLGPWLEELKTGPVRVTAIQGDVTQAHEVAAAVAGAHVVIHTAGLVDVFGRASPKTIHEVNVQGTRNVIEACVQTGTRFLVYTSSMEVVGPNTKGHPFYRGNEDTPYEAVHRHPYPCSKALAEWLVLEANGRKVRGGLPLVTCALRPTGIYGEGHQIMRDFYRQGLRLGGWLFRAIPASVEHGRVYVGNVAWMHVLAARELEQRATLMGGQVYFCYDGSPYRSYEDFNMEFLGPCGLRLVGARPLLPYWLLVFLAALNALLQWLLRPLVLYAPLLNPYTLAVANTTFTVSTDKAQRHFGYEPLFSWEDSRTRTILWVQAATGSAQ</sequence>
<name>3BHS7_HUMAN</name>
<reference key="1">
    <citation type="journal article" date="2000" name="J. Clin. Invest.">
        <title>The bile acid synthetic gene 3beta-hydroxy-delta(5)-C(27)-steroid oxidoreductase is mutated in progressive intrahepatic cholestasis.</title>
        <authorList>
            <person name="Schwarz M."/>
            <person name="Wright A.C."/>
            <person name="Davis D.L."/>
            <person name="Nazer H."/>
            <person name="Bjorkhem I."/>
            <person name="Russell D.W."/>
        </authorList>
    </citation>
    <scope>NUCLEOTIDE SEQUENCE [MRNA] (ISOFORM 1)</scope>
    <scope>FUNCTION</scope>
    <scope>INVOLVEMENT IN CBAS1</scope>
    <scope>VARIANT ALA-250</scope>
    <scope>CATALYTIC ACTIVITY</scope>
</reference>
<reference key="2">
    <citation type="journal article" date="2004" name="Nat. Genet.">
        <title>Complete sequencing and characterization of 21,243 full-length human cDNAs.</title>
        <authorList>
            <person name="Ota T."/>
            <person name="Suzuki Y."/>
            <person name="Nishikawa T."/>
            <person name="Otsuki T."/>
            <person name="Sugiyama T."/>
            <person name="Irie R."/>
            <person name="Wakamatsu A."/>
            <person name="Hayashi K."/>
            <person name="Sato H."/>
            <person name="Nagai K."/>
            <person name="Kimura K."/>
            <person name="Makita H."/>
            <person name="Sekine M."/>
            <person name="Obayashi M."/>
            <person name="Nishi T."/>
            <person name="Shibahara T."/>
            <person name="Tanaka T."/>
            <person name="Ishii S."/>
            <person name="Yamamoto J."/>
            <person name="Saito K."/>
            <person name="Kawai Y."/>
            <person name="Isono Y."/>
            <person name="Nakamura Y."/>
            <person name="Nagahari K."/>
            <person name="Murakami K."/>
            <person name="Yasuda T."/>
            <person name="Iwayanagi T."/>
            <person name="Wagatsuma M."/>
            <person name="Shiratori A."/>
            <person name="Sudo H."/>
            <person name="Hosoiri T."/>
            <person name="Kaku Y."/>
            <person name="Kodaira H."/>
            <person name="Kondo H."/>
            <person name="Sugawara M."/>
            <person name="Takahashi M."/>
            <person name="Kanda K."/>
            <person name="Yokoi T."/>
            <person name="Furuya T."/>
            <person name="Kikkawa E."/>
            <person name="Omura Y."/>
            <person name="Abe K."/>
            <person name="Kamihara K."/>
            <person name="Katsuta N."/>
            <person name="Sato K."/>
            <person name="Tanikawa M."/>
            <person name="Yamazaki M."/>
            <person name="Ninomiya K."/>
            <person name="Ishibashi T."/>
            <person name="Yamashita H."/>
            <person name="Murakawa K."/>
            <person name="Fujimori K."/>
            <person name="Tanai H."/>
            <person name="Kimata M."/>
            <person name="Watanabe M."/>
            <person name="Hiraoka S."/>
            <person name="Chiba Y."/>
            <person name="Ishida S."/>
            <person name="Ono Y."/>
            <person name="Takiguchi S."/>
            <person name="Watanabe S."/>
            <person name="Yosida M."/>
            <person name="Hotuta T."/>
            <person name="Kusano J."/>
            <person name="Kanehori K."/>
            <person name="Takahashi-Fujii A."/>
            <person name="Hara H."/>
            <person name="Tanase T.-O."/>
            <person name="Nomura Y."/>
            <person name="Togiya S."/>
            <person name="Komai F."/>
            <person name="Hara R."/>
            <person name="Takeuchi K."/>
            <person name="Arita M."/>
            <person name="Imose N."/>
            <person name="Musashino K."/>
            <person name="Yuuki H."/>
            <person name="Oshima A."/>
            <person name="Sasaki N."/>
            <person name="Aotsuka S."/>
            <person name="Yoshikawa Y."/>
            <person name="Matsunawa H."/>
            <person name="Ichihara T."/>
            <person name="Shiohata N."/>
            <person name="Sano S."/>
            <person name="Moriya S."/>
            <person name="Momiyama H."/>
            <person name="Satoh N."/>
            <person name="Takami S."/>
            <person name="Terashima Y."/>
            <person name="Suzuki O."/>
            <person name="Nakagawa S."/>
            <person name="Senoh A."/>
            <person name="Mizoguchi H."/>
            <person name="Goto Y."/>
            <person name="Shimizu F."/>
            <person name="Wakebe H."/>
            <person name="Hishigaki H."/>
            <person name="Watanabe T."/>
            <person name="Sugiyama A."/>
            <person name="Takemoto M."/>
            <person name="Kawakami B."/>
            <person name="Yamazaki M."/>
            <person name="Watanabe K."/>
            <person name="Kumagai A."/>
            <person name="Itakura S."/>
            <person name="Fukuzumi Y."/>
            <person name="Fujimori Y."/>
            <person name="Komiyama M."/>
            <person name="Tashiro H."/>
            <person name="Tanigami A."/>
            <person name="Fujiwara T."/>
            <person name="Ono T."/>
            <person name="Yamada K."/>
            <person name="Fujii Y."/>
            <person name="Ozaki K."/>
            <person name="Hirao M."/>
            <person name="Ohmori Y."/>
            <person name="Kawabata A."/>
            <person name="Hikiji T."/>
            <person name="Kobatake N."/>
            <person name="Inagaki H."/>
            <person name="Ikema Y."/>
            <person name="Okamoto S."/>
            <person name="Okitani R."/>
            <person name="Kawakami T."/>
            <person name="Noguchi S."/>
            <person name="Itoh T."/>
            <person name="Shigeta K."/>
            <person name="Senba T."/>
            <person name="Matsumura K."/>
            <person name="Nakajima Y."/>
            <person name="Mizuno T."/>
            <person name="Morinaga M."/>
            <person name="Sasaki M."/>
            <person name="Togashi T."/>
            <person name="Oyama M."/>
            <person name="Hata H."/>
            <person name="Watanabe M."/>
            <person name="Komatsu T."/>
            <person name="Mizushima-Sugano J."/>
            <person name="Satoh T."/>
            <person name="Shirai Y."/>
            <person name="Takahashi Y."/>
            <person name="Nakagawa K."/>
            <person name="Okumura K."/>
            <person name="Nagase T."/>
            <person name="Nomura N."/>
            <person name="Kikuchi H."/>
            <person name="Masuho Y."/>
            <person name="Yamashita R."/>
            <person name="Nakai K."/>
            <person name="Yada T."/>
            <person name="Nakamura Y."/>
            <person name="Ohara O."/>
            <person name="Isogai T."/>
            <person name="Sugano S."/>
        </authorList>
    </citation>
    <scope>NUCLEOTIDE SEQUENCE [LARGE SCALE MRNA] (ISOFORM 2)</scope>
    <source>
        <tissue>Stomach</tissue>
        <tissue>Testis</tissue>
    </source>
</reference>
<reference key="3">
    <citation type="journal article" date="2004" name="Nature">
        <title>The sequence and analysis of duplication-rich human chromosome 16.</title>
        <authorList>
            <person name="Martin J."/>
            <person name="Han C."/>
            <person name="Gordon L.A."/>
            <person name="Terry A."/>
            <person name="Prabhakar S."/>
            <person name="She X."/>
            <person name="Xie G."/>
            <person name="Hellsten U."/>
            <person name="Chan Y.M."/>
            <person name="Altherr M."/>
            <person name="Couronne O."/>
            <person name="Aerts A."/>
            <person name="Bajorek E."/>
            <person name="Black S."/>
            <person name="Blumer H."/>
            <person name="Branscomb E."/>
            <person name="Brown N.C."/>
            <person name="Bruno W.J."/>
            <person name="Buckingham J.M."/>
            <person name="Callen D.F."/>
            <person name="Campbell C.S."/>
            <person name="Campbell M.L."/>
            <person name="Campbell E.W."/>
            <person name="Caoile C."/>
            <person name="Challacombe J.F."/>
            <person name="Chasteen L.A."/>
            <person name="Chertkov O."/>
            <person name="Chi H.C."/>
            <person name="Christensen M."/>
            <person name="Clark L.M."/>
            <person name="Cohn J.D."/>
            <person name="Denys M."/>
            <person name="Detter J.C."/>
            <person name="Dickson M."/>
            <person name="Dimitrijevic-Bussod M."/>
            <person name="Escobar J."/>
            <person name="Fawcett J.J."/>
            <person name="Flowers D."/>
            <person name="Fotopulos D."/>
            <person name="Glavina T."/>
            <person name="Gomez M."/>
            <person name="Gonzales E."/>
            <person name="Goodstein D."/>
            <person name="Goodwin L.A."/>
            <person name="Grady D.L."/>
            <person name="Grigoriev I."/>
            <person name="Groza M."/>
            <person name="Hammon N."/>
            <person name="Hawkins T."/>
            <person name="Haydu L."/>
            <person name="Hildebrand C.E."/>
            <person name="Huang W."/>
            <person name="Israni S."/>
            <person name="Jett J."/>
            <person name="Jewett P.B."/>
            <person name="Kadner K."/>
            <person name="Kimball H."/>
            <person name="Kobayashi A."/>
            <person name="Krawczyk M.-C."/>
            <person name="Leyba T."/>
            <person name="Longmire J.L."/>
            <person name="Lopez F."/>
            <person name="Lou Y."/>
            <person name="Lowry S."/>
            <person name="Ludeman T."/>
            <person name="Manohar C.F."/>
            <person name="Mark G.A."/>
            <person name="McMurray K.L."/>
            <person name="Meincke L.J."/>
            <person name="Morgan J."/>
            <person name="Moyzis R.K."/>
            <person name="Mundt M.O."/>
            <person name="Munk A.C."/>
            <person name="Nandkeshwar R.D."/>
            <person name="Pitluck S."/>
            <person name="Pollard M."/>
            <person name="Predki P."/>
            <person name="Parson-Quintana B."/>
            <person name="Ramirez L."/>
            <person name="Rash S."/>
            <person name="Retterer J."/>
            <person name="Ricke D.O."/>
            <person name="Robinson D.L."/>
            <person name="Rodriguez A."/>
            <person name="Salamov A."/>
            <person name="Saunders E.H."/>
            <person name="Scott D."/>
            <person name="Shough T."/>
            <person name="Stallings R.L."/>
            <person name="Stalvey M."/>
            <person name="Sutherland R.D."/>
            <person name="Tapia R."/>
            <person name="Tesmer J.G."/>
            <person name="Thayer N."/>
            <person name="Thompson L.S."/>
            <person name="Tice H."/>
            <person name="Torney D.C."/>
            <person name="Tran-Gyamfi M."/>
            <person name="Tsai M."/>
            <person name="Ulanovsky L.E."/>
            <person name="Ustaszewska A."/>
            <person name="Vo N."/>
            <person name="White P.S."/>
            <person name="Williams A.L."/>
            <person name="Wills P.L."/>
            <person name="Wu J.-R."/>
            <person name="Wu K."/>
            <person name="Yang J."/>
            <person name="DeJong P."/>
            <person name="Bruce D."/>
            <person name="Doggett N.A."/>
            <person name="Deaven L."/>
            <person name="Schmutz J."/>
            <person name="Grimwood J."/>
            <person name="Richardson P."/>
            <person name="Rokhsar D.S."/>
            <person name="Eichler E.E."/>
            <person name="Gilna P."/>
            <person name="Lucas S.M."/>
            <person name="Myers R.M."/>
            <person name="Rubin E.M."/>
            <person name="Pennacchio L.A."/>
        </authorList>
    </citation>
    <scope>NUCLEOTIDE SEQUENCE [LARGE SCALE GENOMIC DNA]</scope>
</reference>
<reference key="4">
    <citation type="submission" date="2005-07" db="EMBL/GenBank/DDBJ databases">
        <authorList>
            <person name="Mural R.J."/>
            <person name="Istrail S."/>
            <person name="Sutton G."/>
            <person name="Florea L."/>
            <person name="Halpern A.L."/>
            <person name="Mobarry C.M."/>
            <person name="Lippert R."/>
            <person name="Walenz B."/>
            <person name="Shatkay H."/>
            <person name="Dew I."/>
            <person name="Miller J.R."/>
            <person name="Flanigan M.J."/>
            <person name="Edwards N.J."/>
            <person name="Bolanos R."/>
            <person name="Fasulo D."/>
            <person name="Halldorsson B.V."/>
            <person name="Hannenhalli S."/>
            <person name="Turner R."/>
            <person name="Yooseph S."/>
            <person name="Lu F."/>
            <person name="Nusskern D.R."/>
            <person name="Shue B.C."/>
            <person name="Zheng X.H."/>
            <person name="Zhong F."/>
            <person name="Delcher A.L."/>
            <person name="Huson D.H."/>
            <person name="Kravitz S.A."/>
            <person name="Mouchard L."/>
            <person name="Reinert K."/>
            <person name="Remington K.A."/>
            <person name="Clark A.G."/>
            <person name="Waterman M.S."/>
            <person name="Eichler E.E."/>
            <person name="Adams M.D."/>
            <person name="Hunkapiller M.W."/>
            <person name="Myers E.W."/>
            <person name="Venter J.C."/>
        </authorList>
    </citation>
    <scope>NUCLEOTIDE SEQUENCE [LARGE SCALE GENOMIC DNA]</scope>
</reference>
<reference key="5">
    <citation type="journal article" date="2004" name="Genome Res.">
        <title>The status, quality, and expansion of the NIH full-length cDNA project: the Mammalian Gene Collection (MGC).</title>
        <authorList>
            <consortium name="The MGC Project Team"/>
        </authorList>
    </citation>
    <scope>NUCLEOTIDE SEQUENCE [LARGE SCALE MRNA] (ISOFORM 1)</scope>
    <source>
        <tissue>Uterus</tissue>
    </source>
</reference>
<reference key="6">
    <citation type="journal article" date="2003" name="J. Clin. Endocrinol. Metab.">
        <title>Molecular genetics of 3beta-hydroxy-Delta5-C27-steroid oxidoreductase deficiency in 16 patients with loss of bile acid synthesis and liver disease.</title>
        <authorList>
            <person name="Cheng J.B."/>
            <person name="Jacquemin E."/>
            <person name="Gerhardt M."/>
            <person name="Nazer H."/>
            <person name="Cresteil D."/>
            <person name="Heubi J.E."/>
            <person name="Setchell K.D."/>
            <person name="Russell D.W."/>
        </authorList>
    </citation>
    <scope>VARIANTS CBAS1 SER-19 AND LYS-147</scope>
    <scope>CHARACTERIZATION OF VARIANT CBAS1 LYS-147</scope>
</reference>
<organism>
    <name type="scientific">Homo sapiens</name>
    <name type="common">Human</name>
    <dbReference type="NCBI Taxonomy" id="9606"/>
    <lineage>
        <taxon>Eukaryota</taxon>
        <taxon>Metazoa</taxon>
        <taxon>Chordata</taxon>
        <taxon>Craniata</taxon>
        <taxon>Vertebrata</taxon>
        <taxon>Euteleostomi</taxon>
        <taxon>Mammalia</taxon>
        <taxon>Eutheria</taxon>
        <taxon>Euarchontoglires</taxon>
        <taxon>Primates</taxon>
        <taxon>Haplorrhini</taxon>
        <taxon>Catarrhini</taxon>
        <taxon>Hominidae</taxon>
        <taxon>Homo</taxon>
    </lineage>
</organism>
<evidence type="ECO:0000250" key="1"/>
<evidence type="ECO:0000250" key="2">
    <source>
        <dbReference type="UniProtKB" id="Q9EQC1"/>
    </source>
</evidence>
<evidence type="ECO:0000255" key="3"/>
<evidence type="ECO:0000269" key="4">
    <source>
    </source>
</evidence>
<evidence type="ECO:0000269" key="5">
    <source>
    </source>
</evidence>
<evidence type="ECO:0000303" key="6">
    <source>
    </source>
</evidence>
<evidence type="ECO:0000305" key="7"/>
<evidence type="ECO:0000305" key="8">
    <source>
    </source>
</evidence>
<evidence type="ECO:0000312" key="9">
    <source>
        <dbReference type="HGNC" id="HGNC:18324"/>
    </source>
</evidence>
<gene>
    <name evidence="9" type="primary">HSD3B7</name>
</gene>
<keyword id="KW-0025">Alternative splicing</keyword>
<keyword id="KW-0225">Disease variant</keyword>
<keyword id="KW-0256">Endoplasmic reticulum</keyword>
<keyword id="KW-0988">Intrahepatic cholestasis</keyword>
<keyword id="KW-0443">Lipid metabolism</keyword>
<keyword id="KW-0472">Membrane</keyword>
<keyword id="KW-0520">NAD</keyword>
<keyword id="KW-0560">Oxidoreductase</keyword>
<keyword id="KW-1267">Proteomics identification</keyword>
<keyword id="KW-1185">Reference proteome</keyword>
<keyword id="KW-0755">Steroidogenesis</keyword>
<keyword id="KW-0812">Transmembrane</keyword>
<keyword id="KW-1133">Transmembrane helix</keyword>